<feature type="chain" id="PRO_0000316616" description="Protein transport protein sec1">
    <location>
        <begin position="1"/>
        <end position="693"/>
    </location>
</feature>
<feature type="region of interest" description="Disordered" evidence="2">
    <location>
        <begin position="514"/>
        <end position="534"/>
    </location>
</feature>
<feature type="region of interest" description="Disordered" evidence="2">
    <location>
        <begin position="606"/>
        <end position="693"/>
    </location>
</feature>
<feature type="compositionally biased region" description="Low complexity" evidence="2">
    <location>
        <begin position="521"/>
        <end position="534"/>
    </location>
</feature>
<feature type="compositionally biased region" description="Polar residues" evidence="2">
    <location>
        <begin position="632"/>
        <end position="641"/>
    </location>
</feature>
<feature type="compositionally biased region" description="Basic and acidic residues" evidence="2">
    <location>
        <begin position="665"/>
        <end position="676"/>
    </location>
</feature>
<feature type="compositionally biased region" description="Basic residues" evidence="2">
    <location>
        <begin position="684"/>
        <end position="693"/>
    </location>
</feature>
<gene>
    <name type="primary">sec1</name>
    <name type="ORF">SPCC584.05</name>
</gene>
<organism>
    <name type="scientific">Schizosaccharomyces pombe (strain 972 / ATCC 24843)</name>
    <name type="common">Fission yeast</name>
    <dbReference type="NCBI Taxonomy" id="284812"/>
    <lineage>
        <taxon>Eukaryota</taxon>
        <taxon>Fungi</taxon>
        <taxon>Dikarya</taxon>
        <taxon>Ascomycota</taxon>
        <taxon>Taphrinomycotina</taxon>
        <taxon>Schizosaccharomycetes</taxon>
        <taxon>Schizosaccharomycetales</taxon>
        <taxon>Schizosaccharomycetaceae</taxon>
        <taxon>Schizosaccharomyces</taxon>
    </lineage>
</organism>
<dbReference type="EMBL" id="CU329672">
    <property type="protein sequence ID" value="CAA21822.1"/>
    <property type="molecule type" value="Genomic_DNA"/>
</dbReference>
<dbReference type="PIR" id="T41443">
    <property type="entry name" value="T41443"/>
</dbReference>
<dbReference type="RefSeq" id="NP_588226.1">
    <property type="nucleotide sequence ID" value="NM_001023216.2"/>
</dbReference>
<dbReference type="SMR" id="O94590"/>
<dbReference type="BioGRID" id="275431">
    <property type="interactions" value="1"/>
</dbReference>
<dbReference type="FunCoup" id="O94590">
    <property type="interactions" value="326"/>
</dbReference>
<dbReference type="STRING" id="284812.O94590"/>
<dbReference type="iPTMnet" id="O94590"/>
<dbReference type="PaxDb" id="4896-SPCC584.05.1"/>
<dbReference type="EnsemblFungi" id="SPCC584.05.1">
    <property type="protein sequence ID" value="SPCC584.05.1:pep"/>
    <property type="gene ID" value="SPCC584.05"/>
</dbReference>
<dbReference type="GeneID" id="2538850"/>
<dbReference type="KEGG" id="spo:2538850"/>
<dbReference type="PomBase" id="SPCC584.05">
    <property type="gene designation" value="sec1"/>
</dbReference>
<dbReference type="VEuPathDB" id="FungiDB:SPCC584.05"/>
<dbReference type="eggNOG" id="KOG1300">
    <property type="taxonomic scope" value="Eukaryota"/>
</dbReference>
<dbReference type="HOGENOM" id="CLU_009210_1_0_1"/>
<dbReference type="InParanoid" id="O94590"/>
<dbReference type="OMA" id="PFTRPHT"/>
<dbReference type="PhylomeDB" id="O94590"/>
<dbReference type="Reactome" id="R-SPO-114516">
    <property type="pathway name" value="Disinhibition of SNARE formation"/>
</dbReference>
<dbReference type="Reactome" id="R-SPO-114608">
    <property type="pathway name" value="Platelet degranulation"/>
</dbReference>
<dbReference type="PRO" id="PR:O94590"/>
<dbReference type="Proteomes" id="UP000002485">
    <property type="component" value="Chromosome III"/>
</dbReference>
<dbReference type="GO" id="GO:0032153">
    <property type="term" value="C:cell division site"/>
    <property type="evidence" value="ECO:0007005"/>
    <property type="project" value="PomBase"/>
</dbReference>
<dbReference type="GO" id="GO:0051286">
    <property type="term" value="C:cell tip"/>
    <property type="evidence" value="ECO:0007005"/>
    <property type="project" value="PomBase"/>
</dbReference>
<dbReference type="GO" id="GO:0005829">
    <property type="term" value="C:cytosol"/>
    <property type="evidence" value="ECO:0007005"/>
    <property type="project" value="PomBase"/>
</dbReference>
<dbReference type="GO" id="GO:0005634">
    <property type="term" value="C:nucleus"/>
    <property type="evidence" value="ECO:0007005"/>
    <property type="project" value="PomBase"/>
</dbReference>
<dbReference type="GO" id="GO:0005886">
    <property type="term" value="C:plasma membrane"/>
    <property type="evidence" value="ECO:0000318"/>
    <property type="project" value="GO_Central"/>
</dbReference>
<dbReference type="GO" id="GO:0005628">
    <property type="term" value="C:prospore membrane"/>
    <property type="evidence" value="ECO:0000314"/>
    <property type="project" value="PomBase"/>
</dbReference>
<dbReference type="GO" id="GO:0019905">
    <property type="term" value="F:syntaxin binding"/>
    <property type="evidence" value="ECO:0000318"/>
    <property type="project" value="GO_Central"/>
</dbReference>
<dbReference type="GO" id="GO:0006886">
    <property type="term" value="P:intracellular protein transport"/>
    <property type="evidence" value="ECO:0000318"/>
    <property type="project" value="GO_Central"/>
</dbReference>
<dbReference type="GO" id="GO:0006904">
    <property type="term" value="P:vesicle docking involved in exocytosis"/>
    <property type="evidence" value="ECO:0000318"/>
    <property type="project" value="GO_Central"/>
</dbReference>
<dbReference type="GO" id="GO:0006906">
    <property type="term" value="P:vesicle fusion"/>
    <property type="evidence" value="ECO:0000250"/>
    <property type="project" value="PomBase"/>
</dbReference>
<dbReference type="GO" id="GO:0016192">
    <property type="term" value="P:vesicle-mediated transport"/>
    <property type="evidence" value="ECO:0000318"/>
    <property type="project" value="GO_Central"/>
</dbReference>
<dbReference type="Gene3D" id="1.25.40.60">
    <property type="match status" value="1"/>
</dbReference>
<dbReference type="Gene3D" id="3.40.50.1910">
    <property type="match status" value="1"/>
</dbReference>
<dbReference type="Gene3D" id="3.40.50.2060">
    <property type="match status" value="1"/>
</dbReference>
<dbReference type="Gene3D" id="3.90.830.10">
    <property type="entry name" value="Syntaxin Binding Protein 1, Chain A, domain 2"/>
    <property type="match status" value="1"/>
</dbReference>
<dbReference type="InterPro" id="IPR043154">
    <property type="entry name" value="Sec-1-like_dom1"/>
</dbReference>
<dbReference type="InterPro" id="IPR043127">
    <property type="entry name" value="Sec-1-like_dom3a"/>
</dbReference>
<dbReference type="InterPro" id="IPR001619">
    <property type="entry name" value="Sec1-like"/>
</dbReference>
<dbReference type="InterPro" id="IPR027482">
    <property type="entry name" value="Sec1-like_dom2"/>
</dbReference>
<dbReference type="InterPro" id="IPR036045">
    <property type="entry name" value="Sec1-like_sf"/>
</dbReference>
<dbReference type="PANTHER" id="PTHR11679">
    <property type="entry name" value="VESICLE PROTEIN SORTING-ASSOCIATED"/>
    <property type="match status" value="1"/>
</dbReference>
<dbReference type="Pfam" id="PF00995">
    <property type="entry name" value="Sec1"/>
    <property type="match status" value="1"/>
</dbReference>
<dbReference type="PIRSF" id="PIRSF005715">
    <property type="entry name" value="VPS45_Sec1"/>
    <property type="match status" value="1"/>
</dbReference>
<dbReference type="SUPFAM" id="SSF56815">
    <property type="entry name" value="Sec1/munc18-like (SM) proteins"/>
    <property type="match status" value="1"/>
</dbReference>
<name>SEC1_SCHPO</name>
<proteinExistence type="inferred from homology"/>
<keyword id="KW-0963">Cytoplasm</keyword>
<keyword id="KW-0539">Nucleus</keyword>
<keyword id="KW-0653">Protein transport</keyword>
<keyword id="KW-1185">Reference proteome</keyword>
<keyword id="KW-0813">Transport</keyword>
<reference key="1">
    <citation type="journal article" date="2002" name="Nature">
        <title>The genome sequence of Schizosaccharomyces pombe.</title>
        <authorList>
            <person name="Wood V."/>
            <person name="Gwilliam R."/>
            <person name="Rajandream M.A."/>
            <person name="Lyne M.H."/>
            <person name="Lyne R."/>
            <person name="Stewart A."/>
            <person name="Sgouros J.G."/>
            <person name="Peat N."/>
            <person name="Hayles J."/>
            <person name="Baker S.G."/>
            <person name="Basham D."/>
            <person name="Bowman S."/>
            <person name="Brooks K."/>
            <person name="Brown D."/>
            <person name="Brown S."/>
            <person name="Chillingworth T."/>
            <person name="Churcher C.M."/>
            <person name="Collins M."/>
            <person name="Connor R."/>
            <person name="Cronin A."/>
            <person name="Davis P."/>
            <person name="Feltwell T."/>
            <person name="Fraser A."/>
            <person name="Gentles S."/>
            <person name="Goble A."/>
            <person name="Hamlin N."/>
            <person name="Harris D.E."/>
            <person name="Hidalgo J."/>
            <person name="Hodgson G."/>
            <person name="Holroyd S."/>
            <person name="Hornsby T."/>
            <person name="Howarth S."/>
            <person name="Huckle E.J."/>
            <person name="Hunt S."/>
            <person name="Jagels K."/>
            <person name="James K.D."/>
            <person name="Jones L."/>
            <person name="Jones M."/>
            <person name="Leather S."/>
            <person name="McDonald S."/>
            <person name="McLean J."/>
            <person name="Mooney P."/>
            <person name="Moule S."/>
            <person name="Mungall K.L."/>
            <person name="Murphy L.D."/>
            <person name="Niblett D."/>
            <person name="Odell C."/>
            <person name="Oliver K."/>
            <person name="O'Neil S."/>
            <person name="Pearson D."/>
            <person name="Quail M.A."/>
            <person name="Rabbinowitsch E."/>
            <person name="Rutherford K.M."/>
            <person name="Rutter S."/>
            <person name="Saunders D."/>
            <person name="Seeger K."/>
            <person name="Sharp S."/>
            <person name="Skelton J."/>
            <person name="Simmonds M.N."/>
            <person name="Squares R."/>
            <person name="Squares S."/>
            <person name="Stevens K."/>
            <person name="Taylor K."/>
            <person name="Taylor R.G."/>
            <person name="Tivey A."/>
            <person name="Walsh S.V."/>
            <person name="Warren T."/>
            <person name="Whitehead S."/>
            <person name="Woodward J.R."/>
            <person name="Volckaert G."/>
            <person name="Aert R."/>
            <person name="Robben J."/>
            <person name="Grymonprez B."/>
            <person name="Weltjens I."/>
            <person name="Vanstreels E."/>
            <person name="Rieger M."/>
            <person name="Schaefer M."/>
            <person name="Mueller-Auer S."/>
            <person name="Gabel C."/>
            <person name="Fuchs M."/>
            <person name="Duesterhoeft A."/>
            <person name="Fritzc C."/>
            <person name="Holzer E."/>
            <person name="Moestl D."/>
            <person name="Hilbert H."/>
            <person name="Borzym K."/>
            <person name="Langer I."/>
            <person name="Beck A."/>
            <person name="Lehrach H."/>
            <person name="Reinhardt R."/>
            <person name="Pohl T.M."/>
            <person name="Eger P."/>
            <person name="Zimmermann W."/>
            <person name="Wedler H."/>
            <person name="Wambutt R."/>
            <person name="Purnelle B."/>
            <person name="Goffeau A."/>
            <person name="Cadieu E."/>
            <person name="Dreano S."/>
            <person name="Gloux S."/>
            <person name="Lelaure V."/>
            <person name="Mottier S."/>
            <person name="Galibert F."/>
            <person name="Aves S.J."/>
            <person name="Xiang Z."/>
            <person name="Hunt C."/>
            <person name="Moore K."/>
            <person name="Hurst S.M."/>
            <person name="Lucas M."/>
            <person name="Rochet M."/>
            <person name="Gaillardin C."/>
            <person name="Tallada V.A."/>
            <person name="Garzon A."/>
            <person name="Thode G."/>
            <person name="Daga R.R."/>
            <person name="Cruzado L."/>
            <person name="Jimenez J."/>
            <person name="Sanchez M."/>
            <person name="del Rey F."/>
            <person name="Benito J."/>
            <person name="Dominguez A."/>
            <person name="Revuelta J.L."/>
            <person name="Moreno S."/>
            <person name="Armstrong J."/>
            <person name="Forsburg S.L."/>
            <person name="Cerutti L."/>
            <person name="Lowe T."/>
            <person name="McCombie W.R."/>
            <person name="Paulsen I."/>
            <person name="Potashkin J."/>
            <person name="Shpakovski G.V."/>
            <person name="Ussery D."/>
            <person name="Barrell B.G."/>
            <person name="Nurse P."/>
        </authorList>
    </citation>
    <scope>NUCLEOTIDE SEQUENCE [LARGE SCALE GENOMIC DNA]</scope>
    <source>
        <strain>972 / ATCC 24843</strain>
    </source>
</reference>
<reference key="2">
    <citation type="journal article" date="2006" name="Nat. Biotechnol.">
        <title>ORFeome cloning and global analysis of protein localization in the fission yeast Schizosaccharomyces pombe.</title>
        <authorList>
            <person name="Matsuyama A."/>
            <person name="Arai R."/>
            <person name="Yashiroda Y."/>
            <person name="Shirai A."/>
            <person name="Kamata A."/>
            <person name="Sekido S."/>
            <person name="Kobayashi Y."/>
            <person name="Hashimoto A."/>
            <person name="Hamamoto M."/>
            <person name="Hiraoka Y."/>
            <person name="Horinouchi S."/>
            <person name="Yoshida M."/>
        </authorList>
    </citation>
    <scope>SUBCELLULAR LOCATION [LARGE SCALE ANALYSIS]</scope>
</reference>
<protein>
    <recommendedName>
        <fullName>Protein transport protein sec1</fullName>
    </recommendedName>
</protein>
<evidence type="ECO:0000250" key="1"/>
<evidence type="ECO:0000256" key="2">
    <source>
        <dbReference type="SAM" id="MobiDB-lite"/>
    </source>
</evidence>
<evidence type="ECO:0000269" key="3">
    <source>
    </source>
</evidence>
<evidence type="ECO:0000305" key="4"/>
<accession>O94590</accession>
<sequence length="693" mass="79638">MTLLELQKELFLSKINSVECATKWKVLIVDTKTADIINHFITIHSLLEEKIAAVEILENPRTPNSSFEALYILHSEEKLVDCILKDEEYDKRYPGIHIVFLDMVKEPLINKLRTSRIASKIRTVQVAYLDFTSLESRYFQVHDSFSGLRLYHPSNAAIIRQELSKVAHGIFSVCVSLGISPNIRCYYPKNAPHASKTMSFILANQLSEIVEEYCSKHPGYHEAASKSTCLIVDRSLDTAAPFLHEFTYQAMIHDLLPIKNEQYPYEILGPQGTEKRTGKLDDDDLVYTTIRHMHMRDAIEKLMKDFNQFCIDNTLFLDKERATSLNDMRSMLAGLSDFQELRDQYSLHLTMAQECMNIFEKQQLNLIGAIEQDLSTGSNVEGKVPRSVLSELLPLLDEGNAEESTKIRLLLLYIIYRDGIILQDLFRLFRHSNLSTSREQIFQNLEQLGTRVIKNLTDQSSKRKEVANSLPAGEDVYELSRYVPTLKVVLENLIQDKLDPELFPYVRNTTPQTEVSMEQTSLRSSRPSWTRSRSMASKLPREKMLVFVAGGTTFSELRTCYELSDKYNKDIYIGSTVCYSPNEWLDFFSKFQQPREALKFPEDKPRHIPCLEARPSPNRIQEQPNIDVPSTRYENTSSSDAVSIHKDEKKSKGKSHKLGKLMMSSKKDKDKSKEKVPTYGTSDKKKKKRFGVF</sequence>
<comment type="function">
    <text evidence="1">Involved in the final stage of protein secretion.</text>
</comment>
<comment type="subcellular location">
    <subcellularLocation>
        <location evidence="3">Cytoplasm</location>
    </subcellularLocation>
    <subcellularLocation>
        <location evidence="3">Nucleus</location>
    </subcellularLocation>
    <text>Localizes at the cell tip and barrier septum.</text>
</comment>
<comment type="similarity">
    <text evidence="4">Belongs to the STXBP/unc-18/SEC1 family.</text>
</comment>